<keyword id="KW-0963">Cytoplasm</keyword>
<keyword id="KW-0342">GTP-binding</keyword>
<keyword id="KW-0436">Ligase</keyword>
<keyword id="KW-0460">Magnesium</keyword>
<keyword id="KW-0479">Metal-binding</keyword>
<keyword id="KW-0547">Nucleotide-binding</keyword>
<keyword id="KW-0658">Purine biosynthesis</keyword>
<keyword id="KW-1185">Reference proteome</keyword>
<accession>B7IG20</accession>
<evidence type="ECO:0000255" key="1">
    <source>
        <dbReference type="HAMAP-Rule" id="MF_00011"/>
    </source>
</evidence>
<gene>
    <name evidence="1" type="primary">purA</name>
    <name type="ordered locus">THA_546</name>
</gene>
<proteinExistence type="inferred from homology"/>
<name>PURA_THEAB</name>
<comment type="function">
    <text evidence="1">Plays an important role in the de novo pathway of purine nucleotide biosynthesis. Catalyzes the first committed step in the biosynthesis of AMP from IMP.</text>
</comment>
<comment type="catalytic activity">
    <reaction evidence="1">
        <text>IMP + L-aspartate + GTP = N(6)-(1,2-dicarboxyethyl)-AMP + GDP + phosphate + 2 H(+)</text>
        <dbReference type="Rhea" id="RHEA:15753"/>
        <dbReference type="ChEBI" id="CHEBI:15378"/>
        <dbReference type="ChEBI" id="CHEBI:29991"/>
        <dbReference type="ChEBI" id="CHEBI:37565"/>
        <dbReference type="ChEBI" id="CHEBI:43474"/>
        <dbReference type="ChEBI" id="CHEBI:57567"/>
        <dbReference type="ChEBI" id="CHEBI:58053"/>
        <dbReference type="ChEBI" id="CHEBI:58189"/>
        <dbReference type="EC" id="6.3.4.4"/>
    </reaction>
</comment>
<comment type="cofactor">
    <cofactor evidence="1">
        <name>Mg(2+)</name>
        <dbReference type="ChEBI" id="CHEBI:18420"/>
    </cofactor>
    <text evidence="1">Binds 1 Mg(2+) ion per subunit.</text>
</comment>
<comment type="pathway">
    <text evidence="1">Purine metabolism; AMP biosynthesis via de novo pathway; AMP from IMP: step 1/2.</text>
</comment>
<comment type="subunit">
    <text evidence="1">Homodimer.</text>
</comment>
<comment type="subcellular location">
    <subcellularLocation>
        <location evidence="1">Cytoplasm</location>
    </subcellularLocation>
</comment>
<comment type="similarity">
    <text evidence="1">Belongs to the adenylosuccinate synthetase family.</text>
</comment>
<dbReference type="EC" id="6.3.4.4" evidence="1"/>
<dbReference type="EMBL" id="CP001185">
    <property type="protein sequence ID" value="ACJ75034.1"/>
    <property type="molecule type" value="Genomic_DNA"/>
</dbReference>
<dbReference type="RefSeq" id="WP_012579642.1">
    <property type="nucleotide sequence ID" value="NC_011653.1"/>
</dbReference>
<dbReference type="SMR" id="B7IG20"/>
<dbReference type="STRING" id="484019.THA_546"/>
<dbReference type="KEGG" id="taf:THA_546"/>
<dbReference type="eggNOG" id="COG0104">
    <property type="taxonomic scope" value="Bacteria"/>
</dbReference>
<dbReference type="HOGENOM" id="CLU_029848_0_0_0"/>
<dbReference type="OrthoDB" id="9807553at2"/>
<dbReference type="UniPathway" id="UPA00075">
    <property type="reaction ID" value="UER00335"/>
</dbReference>
<dbReference type="Proteomes" id="UP000002453">
    <property type="component" value="Chromosome"/>
</dbReference>
<dbReference type="GO" id="GO:0005737">
    <property type="term" value="C:cytoplasm"/>
    <property type="evidence" value="ECO:0007669"/>
    <property type="project" value="UniProtKB-SubCell"/>
</dbReference>
<dbReference type="GO" id="GO:0004019">
    <property type="term" value="F:adenylosuccinate synthase activity"/>
    <property type="evidence" value="ECO:0007669"/>
    <property type="project" value="UniProtKB-UniRule"/>
</dbReference>
<dbReference type="GO" id="GO:0005525">
    <property type="term" value="F:GTP binding"/>
    <property type="evidence" value="ECO:0007669"/>
    <property type="project" value="UniProtKB-UniRule"/>
</dbReference>
<dbReference type="GO" id="GO:0000287">
    <property type="term" value="F:magnesium ion binding"/>
    <property type="evidence" value="ECO:0007669"/>
    <property type="project" value="UniProtKB-UniRule"/>
</dbReference>
<dbReference type="GO" id="GO:0044208">
    <property type="term" value="P:'de novo' AMP biosynthetic process"/>
    <property type="evidence" value="ECO:0007669"/>
    <property type="project" value="UniProtKB-UniRule"/>
</dbReference>
<dbReference type="GO" id="GO:0046040">
    <property type="term" value="P:IMP metabolic process"/>
    <property type="evidence" value="ECO:0007669"/>
    <property type="project" value="TreeGrafter"/>
</dbReference>
<dbReference type="CDD" id="cd03108">
    <property type="entry name" value="AdSS"/>
    <property type="match status" value="1"/>
</dbReference>
<dbReference type="FunFam" id="1.10.300.10:FF:000001">
    <property type="entry name" value="Adenylosuccinate synthetase"/>
    <property type="match status" value="1"/>
</dbReference>
<dbReference type="FunFam" id="3.90.170.10:FF:000001">
    <property type="entry name" value="Adenylosuccinate synthetase"/>
    <property type="match status" value="1"/>
</dbReference>
<dbReference type="Gene3D" id="3.40.440.10">
    <property type="entry name" value="Adenylosuccinate Synthetase, subunit A, domain 1"/>
    <property type="match status" value="1"/>
</dbReference>
<dbReference type="Gene3D" id="1.10.300.10">
    <property type="entry name" value="Adenylosuccinate Synthetase, subunit A, domain 2"/>
    <property type="match status" value="1"/>
</dbReference>
<dbReference type="Gene3D" id="3.90.170.10">
    <property type="entry name" value="Adenylosuccinate Synthetase, subunit A, domain 3"/>
    <property type="match status" value="1"/>
</dbReference>
<dbReference type="HAMAP" id="MF_00011">
    <property type="entry name" value="Adenylosucc_synth"/>
    <property type="match status" value="1"/>
</dbReference>
<dbReference type="InterPro" id="IPR018220">
    <property type="entry name" value="Adenylosuccin_syn_GTP-bd"/>
</dbReference>
<dbReference type="InterPro" id="IPR033128">
    <property type="entry name" value="Adenylosuccin_syn_Lys_AS"/>
</dbReference>
<dbReference type="InterPro" id="IPR042109">
    <property type="entry name" value="Adenylosuccinate_synth_dom1"/>
</dbReference>
<dbReference type="InterPro" id="IPR042110">
    <property type="entry name" value="Adenylosuccinate_synth_dom2"/>
</dbReference>
<dbReference type="InterPro" id="IPR042111">
    <property type="entry name" value="Adenylosuccinate_synth_dom3"/>
</dbReference>
<dbReference type="InterPro" id="IPR001114">
    <property type="entry name" value="Adenylosuccinate_synthetase"/>
</dbReference>
<dbReference type="InterPro" id="IPR027417">
    <property type="entry name" value="P-loop_NTPase"/>
</dbReference>
<dbReference type="NCBIfam" id="NF002223">
    <property type="entry name" value="PRK01117.1"/>
    <property type="match status" value="1"/>
</dbReference>
<dbReference type="NCBIfam" id="NF010355">
    <property type="entry name" value="PRK13783.1"/>
    <property type="match status" value="1"/>
</dbReference>
<dbReference type="NCBIfam" id="TIGR00184">
    <property type="entry name" value="purA"/>
    <property type="match status" value="1"/>
</dbReference>
<dbReference type="PANTHER" id="PTHR11846">
    <property type="entry name" value="ADENYLOSUCCINATE SYNTHETASE"/>
    <property type="match status" value="1"/>
</dbReference>
<dbReference type="PANTHER" id="PTHR11846:SF0">
    <property type="entry name" value="ADENYLOSUCCINATE SYNTHETASE"/>
    <property type="match status" value="1"/>
</dbReference>
<dbReference type="Pfam" id="PF00709">
    <property type="entry name" value="Adenylsucc_synt"/>
    <property type="match status" value="1"/>
</dbReference>
<dbReference type="SMART" id="SM00788">
    <property type="entry name" value="Adenylsucc_synt"/>
    <property type="match status" value="1"/>
</dbReference>
<dbReference type="SUPFAM" id="SSF52540">
    <property type="entry name" value="P-loop containing nucleoside triphosphate hydrolases"/>
    <property type="match status" value="1"/>
</dbReference>
<dbReference type="PROSITE" id="PS01266">
    <property type="entry name" value="ADENYLOSUCCIN_SYN_1"/>
    <property type="match status" value="1"/>
</dbReference>
<dbReference type="PROSITE" id="PS00513">
    <property type="entry name" value="ADENYLOSUCCIN_SYN_2"/>
    <property type="match status" value="1"/>
</dbReference>
<feature type="chain" id="PRO_1000194777" description="Adenylosuccinate synthetase">
    <location>
        <begin position="1"/>
        <end position="401"/>
    </location>
</feature>
<feature type="active site" description="Proton acceptor" evidence="1">
    <location>
        <position position="12"/>
    </location>
</feature>
<feature type="active site" description="Proton donor" evidence="1">
    <location>
        <position position="40"/>
    </location>
</feature>
<feature type="binding site" evidence="1">
    <location>
        <begin position="11"/>
        <end position="17"/>
    </location>
    <ligand>
        <name>GTP</name>
        <dbReference type="ChEBI" id="CHEBI:37565"/>
    </ligand>
</feature>
<feature type="binding site" description="in other chain" evidence="1">
    <location>
        <begin position="12"/>
        <end position="15"/>
    </location>
    <ligand>
        <name>IMP</name>
        <dbReference type="ChEBI" id="CHEBI:58053"/>
        <note>ligand shared between dimeric partners</note>
    </ligand>
</feature>
<feature type="binding site" evidence="1">
    <location>
        <position position="12"/>
    </location>
    <ligand>
        <name>Mg(2+)</name>
        <dbReference type="ChEBI" id="CHEBI:18420"/>
    </ligand>
</feature>
<feature type="binding site" description="in other chain" evidence="1">
    <location>
        <begin position="37"/>
        <end position="40"/>
    </location>
    <ligand>
        <name>IMP</name>
        <dbReference type="ChEBI" id="CHEBI:58053"/>
        <note>ligand shared between dimeric partners</note>
    </ligand>
</feature>
<feature type="binding site" evidence="1">
    <location>
        <begin position="39"/>
        <end position="41"/>
    </location>
    <ligand>
        <name>GTP</name>
        <dbReference type="ChEBI" id="CHEBI:37565"/>
    </ligand>
</feature>
<feature type="binding site" evidence="1">
    <location>
        <position position="39"/>
    </location>
    <ligand>
        <name>Mg(2+)</name>
        <dbReference type="ChEBI" id="CHEBI:18420"/>
    </ligand>
</feature>
<feature type="binding site" description="in other chain" evidence="1">
    <location>
        <position position="127"/>
    </location>
    <ligand>
        <name>IMP</name>
        <dbReference type="ChEBI" id="CHEBI:58053"/>
        <note>ligand shared between dimeric partners</note>
    </ligand>
</feature>
<feature type="binding site" evidence="1">
    <location>
        <position position="141"/>
    </location>
    <ligand>
        <name>IMP</name>
        <dbReference type="ChEBI" id="CHEBI:58053"/>
        <note>ligand shared between dimeric partners</note>
    </ligand>
</feature>
<feature type="binding site" description="in other chain" evidence="1">
    <location>
        <position position="212"/>
    </location>
    <ligand>
        <name>IMP</name>
        <dbReference type="ChEBI" id="CHEBI:58053"/>
        <note>ligand shared between dimeric partners</note>
    </ligand>
</feature>
<feature type="binding site" description="in other chain" evidence="1">
    <location>
        <position position="227"/>
    </location>
    <ligand>
        <name>IMP</name>
        <dbReference type="ChEBI" id="CHEBI:58053"/>
        <note>ligand shared between dimeric partners</note>
    </ligand>
</feature>
<feature type="binding site" evidence="1">
    <location>
        <begin position="286"/>
        <end position="292"/>
    </location>
    <ligand>
        <name>substrate</name>
    </ligand>
</feature>
<feature type="binding site" description="in other chain" evidence="1">
    <location>
        <position position="290"/>
    </location>
    <ligand>
        <name>IMP</name>
        <dbReference type="ChEBI" id="CHEBI:58053"/>
        <note>ligand shared between dimeric partners</note>
    </ligand>
</feature>
<feature type="binding site" evidence="1">
    <location>
        <position position="292"/>
    </location>
    <ligand>
        <name>GTP</name>
        <dbReference type="ChEBI" id="CHEBI:37565"/>
    </ligand>
</feature>
<feature type="binding site" evidence="1">
    <location>
        <begin position="318"/>
        <end position="320"/>
    </location>
    <ligand>
        <name>GTP</name>
        <dbReference type="ChEBI" id="CHEBI:37565"/>
    </ligand>
</feature>
<feature type="binding site" evidence="1">
    <location>
        <begin position="390"/>
        <end position="392"/>
    </location>
    <ligand>
        <name>GTP</name>
        <dbReference type="ChEBI" id="CHEBI:37565"/>
    </ligand>
</feature>
<reference key="1">
    <citation type="journal article" date="2009" name="J. Bacteriol.">
        <title>The genome of Thermosipho africanus TCF52B: lateral genetic connections to the Firmicutes and Archaea.</title>
        <authorList>
            <person name="Nesboe C.L."/>
            <person name="Bapteste E."/>
            <person name="Curtis B."/>
            <person name="Dahle H."/>
            <person name="Lopez P."/>
            <person name="Macleod D."/>
            <person name="Dlutek M."/>
            <person name="Bowman S."/>
            <person name="Zhaxybayeva O."/>
            <person name="Birkeland N.-K."/>
            <person name="Doolittle W.F."/>
        </authorList>
    </citation>
    <scope>NUCLEOTIDE SEQUENCE [LARGE SCALE GENOMIC DNA]</scope>
    <source>
        <strain>TCF52B</strain>
    </source>
</reference>
<sequence length="401" mass="45185">MKSVIFGLQWGDEGKGKVTTYFSKDYDYVVRYSGGSNAGHTVEYTDFKLIHHLLPSFYVKKNVGAIISNGVVLDLEQLVEEIEEFKSKTGTYPKLYISELAHVVLPHHKKLDEKLEQIKGKNAVGTTKRGIGPAYADKVHRIGIRLSDFKNKDKFYEKIKNISKLYKNLYNIEVESIENVLTSYEKLKSHIVPHGEIINLINQNKILFESTQGVLLDIDVGTYPYVTGANCNTTGIQNGVGFPVKTENYIGVFKAYLTRVGNGPFPTEAFGKEGEEIRKRGHEFGATTGRPRRCGWLDLPLLKYAITVSGATELVMTKGDILNGMEKIKVCVAYKIDGNIVDRISSVDDLEKAEPIYETLDGWENHTSKEFNEYLSFIESYVKRKITHISVGPKVEEIIKL</sequence>
<organism>
    <name type="scientific">Thermosipho africanus (strain TCF52B)</name>
    <dbReference type="NCBI Taxonomy" id="484019"/>
    <lineage>
        <taxon>Bacteria</taxon>
        <taxon>Thermotogati</taxon>
        <taxon>Thermotogota</taxon>
        <taxon>Thermotogae</taxon>
        <taxon>Thermotogales</taxon>
        <taxon>Fervidobacteriaceae</taxon>
        <taxon>Thermosipho</taxon>
    </lineage>
</organism>
<protein>
    <recommendedName>
        <fullName evidence="1">Adenylosuccinate synthetase</fullName>
        <shortName evidence="1">AMPSase</shortName>
        <shortName evidence="1">AdSS</shortName>
        <ecNumber evidence="1">6.3.4.4</ecNumber>
    </recommendedName>
    <alternativeName>
        <fullName evidence="1">IMP--aspartate ligase</fullName>
    </alternativeName>
</protein>